<dbReference type="EC" id="6.3.5.3" evidence="1"/>
<dbReference type="EC" id="3.5.1.2" evidence="1"/>
<dbReference type="EMBL" id="CP001175">
    <property type="protein sequence ID" value="ACK39146.1"/>
    <property type="molecule type" value="Genomic_DNA"/>
</dbReference>
<dbReference type="RefSeq" id="WP_012581148.1">
    <property type="nucleotide sequence ID" value="NC_011660.1"/>
</dbReference>
<dbReference type="SMR" id="B8DDY7"/>
<dbReference type="KEGG" id="lmh:LMHCC_0794"/>
<dbReference type="HOGENOM" id="CLU_001031_3_1_9"/>
<dbReference type="UniPathway" id="UPA00074">
    <property type="reaction ID" value="UER00128"/>
</dbReference>
<dbReference type="GO" id="GO:0005737">
    <property type="term" value="C:cytoplasm"/>
    <property type="evidence" value="ECO:0007669"/>
    <property type="project" value="UniProtKB-SubCell"/>
</dbReference>
<dbReference type="GO" id="GO:0005524">
    <property type="term" value="F:ATP binding"/>
    <property type="evidence" value="ECO:0007669"/>
    <property type="project" value="UniProtKB-KW"/>
</dbReference>
<dbReference type="GO" id="GO:0004359">
    <property type="term" value="F:glutaminase activity"/>
    <property type="evidence" value="ECO:0007669"/>
    <property type="project" value="UniProtKB-EC"/>
</dbReference>
<dbReference type="GO" id="GO:0004642">
    <property type="term" value="F:phosphoribosylformylglycinamidine synthase activity"/>
    <property type="evidence" value="ECO:0007669"/>
    <property type="project" value="UniProtKB-UniRule"/>
</dbReference>
<dbReference type="GO" id="GO:0006189">
    <property type="term" value="P:'de novo' IMP biosynthetic process"/>
    <property type="evidence" value="ECO:0007669"/>
    <property type="project" value="UniProtKB-UniRule"/>
</dbReference>
<dbReference type="CDD" id="cd01740">
    <property type="entry name" value="GATase1_FGAR_AT"/>
    <property type="match status" value="1"/>
</dbReference>
<dbReference type="FunFam" id="3.40.50.880:FF:000019">
    <property type="entry name" value="Phosphoribosylformylglycinamidine synthase subunit PurQ"/>
    <property type="match status" value="1"/>
</dbReference>
<dbReference type="Gene3D" id="3.40.50.880">
    <property type="match status" value="1"/>
</dbReference>
<dbReference type="HAMAP" id="MF_00421">
    <property type="entry name" value="PurQ"/>
    <property type="match status" value="1"/>
</dbReference>
<dbReference type="InterPro" id="IPR029062">
    <property type="entry name" value="Class_I_gatase-like"/>
</dbReference>
<dbReference type="InterPro" id="IPR010075">
    <property type="entry name" value="PRibForGlyAmidine_synth_PurQ"/>
</dbReference>
<dbReference type="NCBIfam" id="TIGR01737">
    <property type="entry name" value="FGAM_synth_I"/>
    <property type="match status" value="1"/>
</dbReference>
<dbReference type="NCBIfam" id="NF002957">
    <property type="entry name" value="PRK03619.1"/>
    <property type="match status" value="1"/>
</dbReference>
<dbReference type="PANTHER" id="PTHR47552">
    <property type="entry name" value="PHOSPHORIBOSYLFORMYLGLYCINAMIDINE SYNTHASE SUBUNIT PURQ"/>
    <property type="match status" value="1"/>
</dbReference>
<dbReference type="PANTHER" id="PTHR47552:SF1">
    <property type="entry name" value="PHOSPHORIBOSYLFORMYLGLYCINAMIDINE SYNTHASE SUBUNIT PURQ"/>
    <property type="match status" value="1"/>
</dbReference>
<dbReference type="Pfam" id="PF13507">
    <property type="entry name" value="GATase_5"/>
    <property type="match status" value="1"/>
</dbReference>
<dbReference type="PIRSF" id="PIRSF001586">
    <property type="entry name" value="FGAM_synth_I"/>
    <property type="match status" value="1"/>
</dbReference>
<dbReference type="SMART" id="SM01211">
    <property type="entry name" value="GATase_5"/>
    <property type="match status" value="1"/>
</dbReference>
<dbReference type="SUPFAM" id="SSF52317">
    <property type="entry name" value="Class I glutamine amidotransferase-like"/>
    <property type="match status" value="1"/>
</dbReference>
<dbReference type="PROSITE" id="PS51273">
    <property type="entry name" value="GATASE_TYPE_1"/>
    <property type="match status" value="1"/>
</dbReference>
<protein>
    <recommendedName>
        <fullName evidence="1">Phosphoribosylformylglycinamidine synthase subunit PurQ</fullName>
        <shortName evidence="1">FGAM synthase</shortName>
        <ecNumber evidence="1">6.3.5.3</ecNumber>
    </recommendedName>
    <alternativeName>
        <fullName evidence="1">Formylglycinamide ribonucleotide amidotransferase subunit I</fullName>
        <shortName evidence="1">FGAR amidotransferase I</shortName>
        <shortName evidence="1">FGAR-AT I</shortName>
    </alternativeName>
    <alternativeName>
        <fullName evidence="1">Glutaminase PurQ</fullName>
        <ecNumber evidence="1">3.5.1.2</ecNumber>
    </alternativeName>
    <alternativeName>
        <fullName evidence="1">Phosphoribosylformylglycinamidine synthase subunit I</fullName>
    </alternativeName>
</protein>
<proteinExistence type="inferred from homology"/>
<comment type="function">
    <text evidence="1">Part of the phosphoribosylformylglycinamidine synthase complex involved in the purines biosynthetic pathway. Catalyzes the ATP-dependent conversion of formylglycinamide ribonucleotide (FGAR) and glutamine to yield formylglycinamidine ribonucleotide (FGAM) and glutamate. The FGAM synthase complex is composed of three subunits. PurQ produces an ammonia molecule by converting glutamine to glutamate. PurL transfers the ammonia molecule to FGAR to form FGAM in an ATP-dependent manner. PurS interacts with PurQ and PurL and is thought to assist in the transfer of the ammonia molecule from PurQ to PurL.</text>
</comment>
<comment type="catalytic activity">
    <reaction evidence="1">
        <text>N(2)-formyl-N(1)-(5-phospho-beta-D-ribosyl)glycinamide + L-glutamine + ATP + H2O = 2-formamido-N(1)-(5-O-phospho-beta-D-ribosyl)acetamidine + L-glutamate + ADP + phosphate + H(+)</text>
        <dbReference type="Rhea" id="RHEA:17129"/>
        <dbReference type="ChEBI" id="CHEBI:15377"/>
        <dbReference type="ChEBI" id="CHEBI:15378"/>
        <dbReference type="ChEBI" id="CHEBI:29985"/>
        <dbReference type="ChEBI" id="CHEBI:30616"/>
        <dbReference type="ChEBI" id="CHEBI:43474"/>
        <dbReference type="ChEBI" id="CHEBI:58359"/>
        <dbReference type="ChEBI" id="CHEBI:147286"/>
        <dbReference type="ChEBI" id="CHEBI:147287"/>
        <dbReference type="ChEBI" id="CHEBI:456216"/>
        <dbReference type="EC" id="6.3.5.3"/>
    </reaction>
</comment>
<comment type="catalytic activity">
    <reaction evidence="1">
        <text>L-glutamine + H2O = L-glutamate + NH4(+)</text>
        <dbReference type="Rhea" id="RHEA:15889"/>
        <dbReference type="ChEBI" id="CHEBI:15377"/>
        <dbReference type="ChEBI" id="CHEBI:28938"/>
        <dbReference type="ChEBI" id="CHEBI:29985"/>
        <dbReference type="ChEBI" id="CHEBI:58359"/>
        <dbReference type="EC" id="3.5.1.2"/>
    </reaction>
</comment>
<comment type="pathway">
    <text evidence="1">Purine metabolism; IMP biosynthesis via de novo pathway; 5-amino-1-(5-phospho-D-ribosyl)imidazole from N(2)-formyl-N(1)-(5-phospho-D-ribosyl)glycinamide: step 1/2.</text>
</comment>
<comment type="subunit">
    <text evidence="1">Part of the FGAM synthase complex composed of 1 PurL, 1 PurQ and 2 PurS subunits.</text>
</comment>
<comment type="subcellular location">
    <subcellularLocation>
        <location evidence="1">Cytoplasm</location>
    </subcellularLocation>
</comment>
<sequence length="227" mass="24957">MKFAVIQFPGSNCDLDMLHAIRDSIGEEAEYVWHAETSLAGFDAVLLPGGFSYGDYLRTGAIAKFSSIMPEVLRFAEMGKPVLGVCNGFQILTEIGLLPGALIRNNNLHFICKTVPLRVANASTMFTELYEEGEIIQVPVAHGEGNYYCDDETLLKLKENNQIVFTYDSVNPNGSRADIAGIVNERGNVLGMMPHPERAVEEIIGGTDGLRLFESVVKAWKEEQVNA</sequence>
<keyword id="KW-0067">ATP-binding</keyword>
<keyword id="KW-0963">Cytoplasm</keyword>
<keyword id="KW-0315">Glutamine amidotransferase</keyword>
<keyword id="KW-0378">Hydrolase</keyword>
<keyword id="KW-0436">Ligase</keyword>
<keyword id="KW-0547">Nucleotide-binding</keyword>
<keyword id="KW-0658">Purine biosynthesis</keyword>
<gene>
    <name evidence="1" type="primary">purQ</name>
    <name type="ordered locus">LMHCC_0794</name>
</gene>
<feature type="chain" id="PRO_1000134915" description="Phosphoribosylformylglycinamidine synthase subunit PurQ">
    <location>
        <begin position="1"/>
        <end position="227"/>
    </location>
</feature>
<feature type="domain" description="Glutamine amidotransferase type-1" evidence="1">
    <location>
        <begin position="2"/>
        <end position="226"/>
    </location>
</feature>
<feature type="active site" description="Nucleophile" evidence="1">
    <location>
        <position position="86"/>
    </location>
</feature>
<feature type="active site" evidence="1">
    <location>
        <position position="195"/>
    </location>
</feature>
<feature type="active site" evidence="1">
    <location>
        <position position="197"/>
    </location>
</feature>
<name>PURQ_LISMH</name>
<organism>
    <name type="scientific">Listeria monocytogenes serotype 4a (strain HCC23)</name>
    <dbReference type="NCBI Taxonomy" id="552536"/>
    <lineage>
        <taxon>Bacteria</taxon>
        <taxon>Bacillati</taxon>
        <taxon>Bacillota</taxon>
        <taxon>Bacilli</taxon>
        <taxon>Bacillales</taxon>
        <taxon>Listeriaceae</taxon>
        <taxon>Listeria</taxon>
    </lineage>
</organism>
<accession>B8DDY7</accession>
<evidence type="ECO:0000255" key="1">
    <source>
        <dbReference type="HAMAP-Rule" id="MF_00421"/>
    </source>
</evidence>
<reference key="1">
    <citation type="journal article" date="2011" name="J. Bacteriol.">
        <title>Genome sequence of lineage III Listeria monocytogenes strain HCC23.</title>
        <authorList>
            <person name="Steele C.L."/>
            <person name="Donaldson J.R."/>
            <person name="Paul D."/>
            <person name="Banes M.M."/>
            <person name="Arick T."/>
            <person name="Bridges S.M."/>
            <person name="Lawrence M.L."/>
        </authorList>
    </citation>
    <scope>NUCLEOTIDE SEQUENCE [LARGE SCALE GENOMIC DNA]</scope>
    <source>
        <strain>HCC23</strain>
    </source>
</reference>